<protein>
    <recommendedName>
        <fullName evidence="1">Gamma-glutamyl phosphate reductase</fullName>
        <shortName evidence="1">GPR</shortName>
        <ecNumber evidence="1">1.2.1.41</ecNumber>
    </recommendedName>
    <alternativeName>
        <fullName evidence="1">Glutamate-5-semialdehyde dehydrogenase</fullName>
    </alternativeName>
    <alternativeName>
        <fullName evidence="1">Glutamyl-gamma-semialdehyde dehydrogenase</fullName>
        <shortName evidence="1">GSA dehydrogenase</shortName>
    </alternativeName>
</protein>
<proteinExistence type="inferred from homology"/>
<name>PROA_SYNWW</name>
<sequence length="419" mass="45046">MDKSLEEKLMEQGKKAKAASRFLATASTTLKNEALLKTADALEAQGAEIVAANAIDLELGEKQGLTPALLERLALNESRIKDMAQGLREIAALPDPVGEVLGMWRRPNGLEVGRIRTPIGVIGIIYESRPNVTADAAGLCLKAGNAILLRGGEEALNSNRIIARIIAQSAKDCGIPEGAVQLVDSEDRQAAVYMMKMNDYLDVLIPRGGKGLKQAVLEHASVPVIMTGMGNCHVYVDALADLSKAQKIVFNAKVQRPSVCNAAETLLVNAKIAGDFLPAMIAELKGAGVEIRGCERSREIVPDILPAREEDWDEEYLDLILAVKVLDSVEDAIEHINCHGTGHSEAIISEDYSSVRRFISAVDAAAVYANASTRFTDGNVFGFGAEMGISTQKLHARGPMGLQELTTTKFIIYGDGQIR</sequence>
<dbReference type="EC" id="1.2.1.41" evidence="1"/>
<dbReference type="EMBL" id="CP000448">
    <property type="protein sequence ID" value="ABI68908.1"/>
    <property type="molecule type" value="Genomic_DNA"/>
</dbReference>
<dbReference type="RefSeq" id="WP_011641006.1">
    <property type="nucleotide sequence ID" value="NC_008346.1"/>
</dbReference>
<dbReference type="SMR" id="Q0AWJ6"/>
<dbReference type="STRING" id="335541.Swol_1607"/>
<dbReference type="KEGG" id="swo:Swol_1607"/>
<dbReference type="eggNOG" id="COG0014">
    <property type="taxonomic scope" value="Bacteria"/>
</dbReference>
<dbReference type="HOGENOM" id="CLU_030231_0_0_9"/>
<dbReference type="OrthoDB" id="9809970at2"/>
<dbReference type="UniPathway" id="UPA00098">
    <property type="reaction ID" value="UER00360"/>
</dbReference>
<dbReference type="Proteomes" id="UP000001968">
    <property type="component" value="Chromosome"/>
</dbReference>
<dbReference type="GO" id="GO:0005737">
    <property type="term" value="C:cytoplasm"/>
    <property type="evidence" value="ECO:0007669"/>
    <property type="project" value="UniProtKB-SubCell"/>
</dbReference>
<dbReference type="GO" id="GO:0004350">
    <property type="term" value="F:glutamate-5-semialdehyde dehydrogenase activity"/>
    <property type="evidence" value="ECO:0007669"/>
    <property type="project" value="UniProtKB-UniRule"/>
</dbReference>
<dbReference type="GO" id="GO:0050661">
    <property type="term" value="F:NADP binding"/>
    <property type="evidence" value="ECO:0007669"/>
    <property type="project" value="InterPro"/>
</dbReference>
<dbReference type="GO" id="GO:0055129">
    <property type="term" value="P:L-proline biosynthetic process"/>
    <property type="evidence" value="ECO:0007669"/>
    <property type="project" value="UniProtKB-UniRule"/>
</dbReference>
<dbReference type="CDD" id="cd07079">
    <property type="entry name" value="ALDH_F18-19_ProA-GPR"/>
    <property type="match status" value="1"/>
</dbReference>
<dbReference type="FunFam" id="3.40.309.10:FF:000006">
    <property type="entry name" value="Gamma-glutamyl phosphate reductase"/>
    <property type="match status" value="1"/>
</dbReference>
<dbReference type="Gene3D" id="3.40.605.10">
    <property type="entry name" value="Aldehyde Dehydrogenase, Chain A, domain 1"/>
    <property type="match status" value="1"/>
</dbReference>
<dbReference type="Gene3D" id="3.40.309.10">
    <property type="entry name" value="Aldehyde Dehydrogenase, Chain A, domain 2"/>
    <property type="match status" value="1"/>
</dbReference>
<dbReference type="HAMAP" id="MF_00412">
    <property type="entry name" value="ProA"/>
    <property type="match status" value="1"/>
</dbReference>
<dbReference type="InterPro" id="IPR016161">
    <property type="entry name" value="Ald_DH/histidinol_DH"/>
</dbReference>
<dbReference type="InterPro" id="IPR016163">
    <property type="entry name" value="Ald_DH_C"/>
</dbReference>
<dbReference type="InterPro" id="IPR016162">
    <property type="entry name" value="Ald_DH_N"/>
</dbReference>
<dbReference type="InterPro" id="IPR015590">
    <property type="entry name" value="Aldehyde_DH_dom"/>
</dbReference>
<dbReference type="InterPro" id="IPR012134">
    <property type="entry name" value="Glu-5-SA_DH"/>
</dbReference>
<dbReference type="InterPro" id="IPR000965">
    <property type="entry name" value="GPR_dom"/>
</dbReference>
<dbReference type="NCBIfam" id="NF001221">
    <property type="entry name" value="PRK00197.1"/>
    <property type="match status" value="1"/>
</dbReference>
<dbReference type="NCBIfam" id="TIGR00407">
    <property type="entry name" value="proA"/>
    <property type="match status" value="1"/>
</dbReference>
<dbReference type="PANTHER" id="PTHR11063:SF8">
    <property type="entry name" value="DELTA-1-PYRROLINE-5-CARBOXYLATE SYNTHASE"/>
    <property type="match status" value="1"/>
</dbReference>
<dbReference type="PANTHER" id="PTHR11063">
    <property type="entry name" value="GLUTAMATE SEMIALDEHYDE DEHYDROGENASE"/>
    <property type="match status" value="1"/>
</dbReference>
<dbReference type="Pfam" id="PF00171">
    <property type="entry name" value="Aldedh"/>
    <property type="match status" value="2"/>
</dbReference>
<dbReference type="PIRSF" id="PIRSF000151">
    <property type="entry name" value="GPR"/>
    <property type="match status" value="1"/>
</dbReference>
<dbReference type="SUPFAM" id="SSF53720">
    <property type="entry name" value="ALDH-like"/>
    <property type="match status" value="1"/>
</dbReference>
<accession>Q0AWJ6</accession>
<comment type="function">
    <text evidence="1">Catalyzes the NADPH-dependent reduction of L-glutamate 5-phosphate into L-glutamate 5-semialdehyde and phosphate. The product spontaneously undergoes cyclization to form 1-pyrroline-5-carboxylate.</text>
</comment>
<comment type="catalytic activity">
    <reaction evidence="1">
        <text>L-glutamate 5-semialdehyde + phosphate + NADP(+) = L-glutamyl 5-phosphate + NADPH + H(+)</text>
        <dbReference type="Rhea" id="RHEA:19541"/>
        <dbReference type="ChEBI" id="CHEBI:15378"/>
        <dbReference type="ChEBI" id="CHEBI:43474"/>
        <dbReference type="ChEBI" id="CHEBI:57783"/>
        <dbReference type="ChEBI" id="CHEBI:58066"/>
        <dbReference type="ChEBI" id="CHEBI:58274"/>
        <dbReference type="ChEBI" id="CHEBI:58349"/>
        <dbReference type="EC" id="1.2.1.41"/>
    </reaction>
</comment>
<comment type="pathway">
    <text evidence="1">Amino-acid biosynthesis; L-proline biosynthesis; L-glutamate 5-semialdehyde from L-glutamate: step 2/2.</text>
</comment>
<comment type="subcellular location">
    <subcellularLocation>
        <location evidence="1">Cytoplasm</location>
    </subcellularLocation>
</comment>
<comment type="similarity">
    <text evidence="1">Belongs to the gamma-glutamyl phosphate reductase family.</text>
</comment>
<keyword id="KW-0028">Amino-acid biosynthesis</keyword>
<keyword id="KW-0963">Cytoplasm</keyword>
<keyword id="KW-0521">NADP</keyword>
<keyword id="KW-0560">Oxidoreductase</keyword>
<keyword id="KW-0641">Proline biosynthesis</keyword>
<keyword id="KW-1185">Reference proteome</keyword>
<organism>
    <name type="scientific">Syntrophomonas wolfei subsp. wolfei (strain DSM 2245B / Goettingen)</name>
    <dbReference type="NCBI Taxonomy" id="335541"/>
    <lineage>
        <taxon>Bacteria</taxon>
        <taxon>Bacillati</taxon>
        <taxon>Bacillota</taxon>
        <taxon>Clostridia</taxon>
        <taxon>Eubacteriales</taxon>
        <taxon>Syntrophomonadaceae</taxon>
        <taxon>Syntrophomonas</taxon>
    </lineage>
</organism>
<evidence type="ECO:0000255" key="1">
    <source>
        <dbReference type="HAMAP-Rule" id="MF_00412"/>
    </source>
</evidence>
<reference key="1">
    <citation type="journal article" date="2010" name="Environ. Microbiol.">
        <title>The genome of Syntrophomonas wolfei: new insights into syntrophic metabolism and biohydrogen production.</title>
        <authorList>
            <person name="Sieber J.R."/>
            <person name="Sims D.R."/>
            <person name="Han C."/>
            <person name="Kim E."/>
            <person name="Lykidis A."/>
            <person name="Lapidus A.L."/>
            <person name="McDonnald E."/>
            <person name="Rohlin L."/>
            <person name="Culley D.E."/>
            <person name="Gunsalus R."/>
            <person name="McInerney M.J."/>
        </authorList>
    </citation>
    <scope>NUCLEOTIDE SEQUENCE [LARGE SCALE GENOMIC DNA]</scope>
    <source>
        <strain>DSM 2245B / Goettingen</strain>
    </source>
</reference>
<gene>
    <name evidence="1" type="primary">proA</name>
    <name type="ordered locus">Swol_1607</name>
</gene>
<feature type="chain" id="PRO_0000340925" description="Gamma-glutamyl phosphate reductase">
    <location>
        <begin position="1"/>
        <end position="419"/>
    </location>
</feature>